<sequence length="161" mass="16882">MTQLTHFDTAGQAHMVDVGDKASTHRVAVATGTITMLPDTFALVRDGNAKKGDVLGIARVAAIMATKRTADLIPLCHPIGLTKVAVDFALDEAGSSITCTVRTETRGQTGVEMEALTGVQVALLTIYDMCKAVDRGMVMGNVKLLEKHGGKSGDWVSTPAG</sequence>
<evidence type="ECO:0000255" key="1">
    <source>
        <dbReference type="HAMAP-Rule" id="MF_01224"/>
    </source>
</evidence>
<keyword id="KW-0456">Lyase</keyword>
<keyword id="KW-0501">Molybdenum cofactor biosynthesis</keyword>
<organism>
    <name type="scientific">Cupriavidus pinatubonensis (strain JMP 134 / LMG 1197)</name>
    <name type="common">Cupriavidus necator (strain JMP 134)</name>
    <dbReference type="NCBI Taxonomy" id="264198"/>
    <lineage>
        <taxon>Bacteria</taxon>
        <taxon>Pseudomonadati</taxon>
        <taxon>Pseudomonadota</taxon>
        <taxon>Betaproteobacteria</taxon>
        <taxon>Burkholderiales</taxon>
        <taxon>Burkholderiaceae</taxon>
        <taxon>Cupriavidus</taxon>
    </lineage>
</organism>
<name>MOAC_CUPPJ</name>
<protein>
    <recommendedName>
        <fullName evidence="1">Cyclic pyranopterin monophosphate synthase</fullName>
        <ecNumber evidence="1">4.6.1.17</ecNumber>
    </recommendedName>
    <alternativeName>
        <fullName evidence="1">Molybdenum cofactor biosynthesis protein C</fullName>
    </alternativeName>
</protein>
<reference key="1">
    <citation type="journal article" date="2010" name="PLoS ONE">
        <title>The complete multipartite genome sequence of Cupriavidus necator JMP134, a versatile pollutant degrader.</title>
        <authorList>
            <person name="Lykidis A."/>
            <person name="Perez-Pantoja D."/>
            <person name="Ledger T."/>
            <person name="Mavromatis K."/>
            <person name="Anderson I.J."/>
            <person name="Ivanova N.N."/>
            <person name="Hooper S.D."/>
            <person name="Lapidus A."/>
            <person name="Lucas S."/>
            <person name="Gonzalez B."/>
            <person name="Kyrpides N.C."/>
        </authorList>
    </citation>
    <scope>NUCLEOTIDE SEQUENCE [LARGE SCALE GENOMIC DNA]</scope>
    <source>
        <strain>JMP134 / LMG 1197</strain>
    </source>
</reference>
<accession>Q475L1</accession>
<dbReference type="EC" id="4.6.1.17" evidence="1"/>
<dbReference type="EMBL" id="CP000090">
    <property type="protein sequence ID" value="AAZ59922.1"/>
    <property type="molecule type" value="Genomic_DNA"/>
</dbReference>
<dbReference type="SMR" id="Q475L1"/>
<dbReference type="STRING" id="264198.Reut_A0540"/>
<dbReference type="KEGG" id="reu:Reut_A0540"/>
<dbReference type="eggNOG" id="COG0315">
    <property type="taxonomic scope" value="Bacteria"/>
</dbReference>
<dbReference type="HOGENOM" id="CLU_074693_1_1_4"/>
<dbReference type="OrthoDB" id="9794429at2"/>
<dbReference type="UniPathway" id="UPA00344"/>
<dbReference type="GO" id="GO:0061799">
    <property type="term" value="F:cyclic pyranopterin monophosphate synthase activity"/>
    <property type="evidence" value="ECO:0007669"/>
    <property type="project" value="UniProtKB-UniRule"/>
</dbReference>
<dbReference type="GO" id="GO:0006777">
    <property type="term" value="P:Mo-molybdopterin cofactor biosynthetic process"/>
    <property type="evidence" value="ECO:0007669"/>
    <property type="project" value="UniProtKB-UniRule"/>
</dbReference>
<dbReference type="CDD" id="cd01420">
    <property type="entry name" value="MoaC_PE"/>
    <property type="match status" value="1"/>
</dbReference>
<dbReference type="Gene3D" id="3.30.70.640">
    <property type="entry name" value="Molybdopterin cofactor biosynthesis C (MoaC) domain"/>
    <property type="match status" value="1"/>
</dbReference>
<dbReference type="HAMAP" id="MF_01224_B">
    <property type="entry name" value="MoaC_B"/>
    <property type="match status" value="1"/>
</dbReference>
<dbReference type="InterPro" id="IPR023045">
    <property type="entry name" value="MoaC"/>
</dbReference>
<dbReference type="InterPro" id="IPR047594">
    <property type="entry name" value="MoaC_bact/euk"/>
</dbReference>
<dbReference type="InterPro" id="IPR036522">
    <property type="entry name" value="MoaC_sf"/>
</dbReference>
<dbReference type="InterPro" id="IPR050105">
    <property type="entry name" value="MoCo_biosynth_MoaA/MoaC"/>
</dbReference>
<dbReference type="InterPro" id="IPR002820">
    <property type="entry name" value="Mopterin_CF_biosynth-C_dom"/>
</dbReference>
<dbReference type="NCBIfam" id="TIGR00581">
    <property type="entry name" value="moaC"/>
    <property type="match status" value="1"/>
</dbReference>
<dbReference type="NCBIfam" id="NF006870">
    <property type="entry name" value="PRK09364.1"/>
    <property type="match status" value="1"/>
</dbReference>
<dbReference type="PANTHER" id="PTHR22960">
    <property type="entry name" value="MOLYBDOPTERIN COFACTOR SYNTHESIS PROTEIN A"/>
    <property type="match status" value="1"/>
</dbReference>
<dbReference type="Pfam" id="PF01967">
    <property type="entry name" value="MoaC"/>
    <property type="match status" value="1"/>
</dbReference>
<dbReference type="SUPFAM" id="SSF55040">
    <property type="entry name" value="Molybdenum cofactor biosynthesis protein C, MoaC"/>
    <property type="match status" value="1"/>
</dbReference>
<proteinExistence type="inferred from homology"/>
<feature type="chain" id="PRO_1000054126" description="Cyclic pyranopterin monophosphate synthase">
    <location>
        <begin position="1"/>
        <end position="161"/>
    </location>
</feature>
<feature type="active site" evidence="1">
    <location>
        <position position="128"/>
    </location>
</feature>
<feature type="binding site" evidence="1">
    <location>
        <begin position="75"/>
        <end position="77"/>
    </location>
    <ligand>
        <name>substrate</name>
    </ligand>
</feature>
<feature type="binding site" evidence="1">
    <location>
        <begin position="113"/>
        <end position="114"/>
    </location>
    <ligand>
        <name>substrate</name>
    </ligand>
</feature>
<gene>
    <name evidence="1" type="primary">moaC</name>
    <name type="ordered locus">Reut_A0540</name>
</gene>
<comment type="function">
    <text evidence="1">Catalyzes the conversion of (8S)-3',8-cyclo-7,8-dihydroguanosine 5'-triphosphate to cyclic pyranopterin monophosphate (cPMP).</text>
</comment>
<comment type="catalytic activity">
    <reaction evidence="1">
        <text>(8S)-3',8-cyclo-7,8-dihydroguanosine 5'-triphosphate = cyclic pyranopterin phosphate + diphosphate</text>
        <dbReference type="Rhea" id="RHEA:49580"/>
        <dbReference type="ChEBI" id="CHEBI:33019"/>
        <dbReference type="ChEBI" id="CHEBI:59648"/>
        <dbReference type="ChEBI" id="CHEBI:131766"/>
        <dbReference type="EC" id="4.6.1.17"/>
    </reaction>
</comment>
<comment type="pathway">
    <text evidence="1">Cofactor biosynthesis; molybdopterin biosynthesis.</text>
</comment>
<comment type="subunit">
    <text evidence="1">Homohexamer; trimer of dimers.</text>
</comment>
<comment type="similarity">
    <text evidence="1">Belongs to the MoaC family.</text>
</comment>